<name>PLSX_LISMH</name>
<protein>
    <recommendedName>
        <fullName evidence="1">Phosphate acyltransferase</fullName>
        <ecNumber evidence="1">2.3.1.274</ecNumber>
    </recommendedName>
    <alternativeName>
        <fullName evidence="1">Acyl-ACP phosphotransacylase</fullName>
    </alternativeName>
    <alternativeName>
        <fullName evidence="1">Acyl-[acyl-carrier-protein]--phosphate acyltransferase</fullName>
    </alternativeName>
    <alternativeName>
        <fullName evidence="1">Phosphate-acyl-ACP acyltransferase</fullName>
    </alternativeName>
</protein>
<accession>B8DDU3</accession>
<sequence>MKIAVDAMGGDHAPKEIVLGVMKAVAQYKDVEILLFGDETKINEYLTDKTRVKIIHTDEKIESDDEPVRAVKRKKKASMVLAAQAVKDGEADACISAGNTGALMSTGLFVIGRIKGIDRPALAPTLPTVTGKGFVMLDLGANAEAKPEHLLQFGLMGSVYAEKVRKIDRPRVALLNIGTEETKGNDLTKKSFELMKNQDAYEFIGNIEARDLLMDVADVVVTDGFTGNMVLKSIEGTGAAFLSMLKMSLLNGFKNKVAASFLKKDLMALKAKMDYSEYGGACLFGVQAPVVKAHGSSNANGIFTTIRQVREMVEKQVVETIKAEVDKVKVGGTESND</sequence>
<feature type="chain" id="PRO_1000193139" description="Phosphate acyltransferase">
    <location>
        <begin position="1"/>
        <end position="337"/>
    </location>
</feature>
<proteinExistence type="inferred from homology"/>
<dbReference type="EC" id="2.3.1.274" evidence="1"/>
<dbReference type="EMBL" id="CP001175">
    <property type="protein sequence ID" value="ACK39102.1"/>
    <property type="molecule type" value="Genomic_DNA"/>
</dbReference>
<dbReference type="RefSeq" id="WP_003723870.1">
    <property type="nucleotide sequence ID" value="NC_011660.1"/>
</dbReference>
<dbReference type="SMR" id="B8DDU3"/>
<dbReference type="KEGG" id="lmh:LMHCC_0748"/>
<dbReference type="HOGENOM" id="CLU_039379_1_1_9"/>
<dbReference type="UniPathway" id="UPA00085"/>
<dbReference type="GO" id="GO:0005737">
    <property type="term" value="C:cytoplasm"/>
    <property type="evidence" value="ECO:0007669"/>
    <property type="project" value="UniProtKB-SubCell"/>
</dbReference>
<dbReference type="GO" id="GO:0043811">
    <property type="term" value="F:phosphate:acyl-[acyl carrier protein] acyltransferase activity"/>
    <property type="evidence" value="ECO:0007669"/>
    <property type="project" value="UniProtKB-UniRule"/>
</dbReference>
<dbReference type="GO" id="GO:0006633">
    <property type="term" value="P:fatty acid biosynthetic process"/>
    <property type="evidence" value="ECO:0007669"/>
    <property type="project" value="UniProtKB-UniRule"/>
</dbReference>
<dbReference type="GO" id="GO:0008654">
    <property type="term" value="P:phospholipid biosynthetic process"/>
    <property type="evidence" value="ECO:0007669"/>
    <property type="project" value="UniProtKB-KW"/>
</dbReference>
<dbReference type="Gene3D" id="3.40.718.10">
    <property type="entry name" value="Isopropylmalate Dehydrogenase"/>
    <property type="match status" value="1"/>
</dbReference>
<dbReference type="HAMAP" id="MF_00019">
    <property type="entry name" value="PlsX"/>
    <property type="match status" value="1"/>
</dbReference>
<dbReference type="InterPro" id="IPR003664">
    <property type="entry name" value="FA_synthesis"/>
</dbReference>
<dbReference type="InterPro" id="IPR012281">
    <property type="entry name" value="Phospholipid_synth_PlsX-like"/>
</dbReference>
<dbReference type="NCBIfam" id="TIGR00182">
    <property type="entry name" value="plsX"/>
    <property type="match status" value="1"/>
</dbReference>
<dbReference type="PANTHER" id="PTHR30100">
    <property type="entry name" value="FATTY ACID/PHOSPHOLIPID SYNTHESIS PROTEIN PLSX"/>
    <property type="match status" value="1"/>
</dbReference>
<dbReference type="PANTHER" id="PTHR30100:SF1">
    <property type="entry name" value="PHOSPHATE ACYLTRANSFERASE"/>
    <property type="match status" value="1"/>
</dbReference>
<dbReference type="Pfam" id="PF02504">
    <property type="entry name" value="FA_synthesis"/>
    <property type="match status" value="1"/>
</dbReference>
<dbReference type="PIRSF" id="PIRSF002465">
    <property type="entry name" value="Phsphlp_syn_PlsX"/>
    <property type="match status" value="1"/>
</dbReference>
<dbReference type="SUPFAM" id="SSF53659">
    <property type="entry name" value="Isocitrate/Isopropylmalate dehydrogenase-like"/>
    <property type="match status" value="1"/>
</dbReference>
<organism>
    <name type="scientific">Listeria monocytogenes serotype 4a (strain HCC23)</name>
    <dbReference type="NCBI Taxonomy" id="552536"/>
    <lineage>
        <taxon>Bacteria</taxon>
        <taxon>Bacillati</taxon>
        <taxon>Bacillota</taxon>
        <taxon>Bacilli</taxon>
        <taxon>Bacillales</taxon>
        <taxon>Listeriaceae</taxon>
        <taxon>Listeria</taxon>
    </lineage>
</organism>
<keyword id="KW-0963">Cytoplasm</keyword>
<keyword id="KW-0444">Lipid biosynthesis</keyword>
<keyword id="KW-0443">Lipid metabolism</keyword>
<keyword id="KW-0594">Phospholipid biosynthesis</keyword>
<keyword id="KW-1208">Phospholipid metabolism</keyword>
<keyword id="KW-0808">Transferase</keyword>
<evidence type="ECO:0000255" key="1">
    <source>
        <dbReference type="HAMAP-Rule" id="MF_00019"/>
    </source>
</evidence>
<comment type="function">
    <text evidence="1">Catalyzes the reversible formation of acyl-phosphate (acyl-PO(4)) from acyl-[acyl-carrier-protein] (acyl-ACP). This enzyme utilizes acyl-ACP as fatty acyl donor, but not acyl-CoA.</text>
</comment>
<comment type="catalytic activity">
    <reaction evidence="1">
        <text>a fatty acyl-[ACP] + phosphate = an acyl phosphate + holo-[ACP]</text>
        <dbReference type="Rhea" id="RHEA:42292"/>
        <dbReference type="Rhea" id="RHEA-COMP:9685"/>
        <dbReference type="Rhea" id="RHEA-COMP:14125"/>
        <dbReference type="ChEBI" id="CHEBI:43474"/>
        <dbReference type="ChEBI" id="CHEBI:59918"/>
        <dbReference type="ChEBI" id="CHEBI:64479"/>
        <dbReference type="ChEBI" id="CHEBI:138651"/>
        <dbReference type="EC" id="2.3.1.274"/>
    </reaction>
</comment>
<comment type="pathway">
    <text evidence="1">Lipid metabolism; phospholipid metabolism.</text>
</comment>
<comment type="subunit">
    <text evidence="1">Homodimer. Probably interacts with PlsY.</text>
</comment>
<comment type="subcellular location">
    <subcellularLocation>
        <location evidence="1">Cytoplasm</location>
    </subcellularLocation>
    <text evidence="1">Associated with the membrane possibly through PlsY.</text>
</comment>
<comment type="similarity">
    <text evidence="1">Belongs to the PlsX family.</text>
</comment>
<reference key="1">
    <citation type="journal article" date="2011" name="J. Bacteriol.">
        <title>Genome sequence of lineage III Listeria monocytogenes strain HCC23.</title>
        <authorList>
            <person name="Steele C.L."/>
            <person name="Donaldson J.R."/>
            <person name="Paul D."/>
            <person name="Banes M.M."/>
            <person name="Arick T."/>
            <person name="Bridges S.M."/>
            <person name="Lawrence M.L."/>
        </authorList>
    </citation>
    <scope>NUCLEOTIDE SEQUENCE [LARGE SCALE GENOMIC DNA]</scope>
    <source>
        <strain>HCC23</strain>
    </source>
</reference>
<gene>
    <name evidence="1" type="primary">plsX</name>
    <name type="ordered locus">LMHCC_0748</name>
</gene>